<name>DMSD_SALTI</name>
<proteinExistence type="inferred from homology"/>
<protein>
    <recommendedName>
        <fullName evidence="1">Tat proofreading chaperone DmsD</fullName>
    </recommendedName>
    <alternativeName>
        <fullName evidence="1">DMSO reductase maturation protein</fullName>
    </alternativeName>
    <alternativeName>
        <fullName evidence="1">Twin-arginine leader-binding protein DmsD</fullName>
    </alternativeName>
</protein>
<accession>Q8Z6Y5</accession>
<accession>Q7C9V2</accession>
<reference key="1">
    <citation type="journal article" date="2001" name="Nature">
        <title>Complete genome sequence of a multiple drug resistant Salmonella enterica serovar Typhi CT18.</title>
        <authorList>
            <person name="Parkhill J."/>
            <person name="Dougan G."/>
            <person name="James K.D."/>
            <person name="Thomson N.R."/>
            <person name="Pickard D."/>
            <person name="Wain J."/>
            <person name="Churcher C.M."/>
            <person name="Mungall K.L."/>
            <person name="Bentley S.D."/>
            <person name="Holden M.T.G."/>
            <person name="Sebaihia M."/>
            <person name="Baker S."/>
            <person name="Basham D."/>
            <person name="Brooks K."/>
            <person name="Chillingworth T."/>
            <person name="Connerton P."/>
            <person name="Cronin A."/>
            <person name="Davis P."/>
            <person name="Davies R.M."/>
            <person name="Dowd L."/>
            <person name="White N."/>
            <person name="Farrar J."/>
            <person name="Feltwell T."/>
            <person name="Hamlin N."/>
            <person name="Haque A."/>
            <person name="Hien T.T."/>
            <person name="Holroyd S."/>
            <person name="Jagels K."/>
            <person name="Krogh A."/>
            <person name="Larsen T.S."/>
            <person name="Leather S."/>
            <person name="Moule S."/>
            <person name="O'Gaora P."/>
            <person name="Parry C."/>
            <person name="Quail M.A."/>
            <person name="Rutherford K.M."/>
            <person name="Simmonds M."/>
            <person name="Skelton J."/>
            <person name="Stevens K."/>
            <person name="Whitehead S."/>
            <person name="Barrell B.G."/>
        </authorList>
    </citation>
    <scope>NUCLEOTIDE SEQUENCE [LARGE SCALE GENOMIC DNA]</scope>
    <source>
        <strain>CT18</strain>
    </source>
</reference>
<reference key="2">
    <citation type="journal article" date="2003" name="J. Bacteriol.">
        <title>Comparative genomics of Salmonella enterica serovar Typhi strains Ty2 and CT18.</title>
        <authorList>
            <person name="Deng W."/>
            <person name="Liou S.-R."/>
            <person name="Plunkett G. III"/>
            <person name="Mayhew G.F."/>
            <person name="Rose D.J."/>
            <person name="Burland V."/>
            <person name="Kodoyianni V."/>
            <person name="Schwartz D.C."/>
            <person name="Blattner F.R."/>
        </authorList>
    </citation>
    <scope>NUCLEOTIDE SEQUENCE [LARGE SCALE GENOMIC DNA]</scope>
    <source>
        <strain>ATCC 700931 / Ty2</strain>
    </source>
</reference>
<evidence type="ECO:0000255" key="1">
    <source>
        <dbReference type="HAMAP-Rule" id="MF_00940"/>
    </source>
</evidence>
<sequence length="204" mass="23417">MTTFLQRDDFAVTARVLGALFYYSPESHETAPLVQALLNDDWQAQWPLDAEALAPVAAMFKTHSEESLPQAWQRLFIGPYALPSPPWGSVWLDRESVLFGDSTLALRQWMRENGIQFEMQQNEPEDHFGALLLLAAWLAENGRHHECEQLLAWHLFPWSPRFLDVFIDHAGHPFYQALGQLARLTLAQWQAQLIIPVAVKPLFR</sequence>
<gene>
    <name evidence="1" type="primary">dmsD</name>
    <name type="ordered locus">STY1569</name>
    <name type="ordered locus">t1416</name>
</gene>
<feature type="chain" id="PRO_0000211653" description="Tat proofreading chaperone DmsD">
    <location>
        <begin position="1"/>
        <end position="204"/>
    </location>
</feature>
<keyword id="KW-0143">Chaperone</keyword>
<organism>
    <name type="scientific">Salmonella typhi</name>
    <dbReference type="NCBI Taxonomy" id="90370"/>
    <lineage>
        <taxon>Bacteria</taxon>
        <taxon>Pseudomonadati</taxon>
        <taxon>Pseudomonadota</taxon>
        <taxon>Gammaproteobacteria</taxon>
        <taxon>Enterobacterales</taxon>
        <taxon>Enterobacteriaceae</taxon>
        <taxon>Salmonella</taxon>
    </lineage>
</organism>
<comment type="function">
    <text evidence="1">Required for biogenesis/assembly of DMSO reductase, but not for the interaction of the DmsA signal peptide with the Tat system. May be part of a chaperone cascade complex that facilitates a folding-maturation pathway for the substrate protein.</text>
</comment>
<comment type="similarity">
    <text evidence="1">Belongs to the TorD/DmsD family. DmsD subfamily.</text>
</comment>
<dbReference type="EMBL" id="AL513382">
    <property type="protein sequence ID" value="CAD01818.1"/>
    <property type="molecule type" value="Genomic_DNA"/>
</dbReference>
<dbReference type="EMBL" id="AE014613">
    <property type="protein sequence ID" value="AAO69060.1"/>
    <property type="molecule type" value="Genomic_DNA"/>
</dbReference>
<dbReference type="RefSeq" id="NP_455984.1">
    <property type="nucleotide sequence ID" value="NC_003198.1"/>
</dbReference>
<dbReference type="RefSeq" id="WP_000206559.1">
    <property type="nucleotide sequence ID" value="NZ_WSUR01000006.1"/>
</dbReference>
<dbReference type="SMR" id="Q8Z6Y5"/>
<dbReference type="STRING" id="220341.gene:17585508"/>
<dbReference type="KEGG" id="stt:t1416"/>
<dbReference type="KEGG" id="sty:STY1569"/>
<dbReference type="PATRIC" id="fig|220341.7.peg.1578"/>
<dbReference type="eggNOG" id="COG3381">
    <property type="taxonomic scope" value="Bacteria"/>
</dbReference>
<dbReference type="HOGENOM" id="CLU_077650_7_1_6"/>
<dbReference type="OMA" id="AWHLLPW"/>
<dbReference type="OrthoDB" id="3174863at2"/>
<dbReference type="Proteomes" id="UP000000541">
    <property type="component" value="Chromosome"/>
</dbReference>
<dbReference type="Proteomes" id="UP000002670">
    <property type="component" value="Chromosome"/>
</dbReference>
<dbReference type="GO" id="GO:0005048">
    <property type="term" value="F:signal sequence binding"/>
    <property type="evidence" value="ECO:0007669"/>
    <property type="project" value="InterPro"/>
</dbReference>
<dbReference type="GO" id="GO:0061077">
    <property type="term" value="P:chaperone-mediated protein folding"/>
    <property type="evidence" value="ECO:0007669"/>
    <property type="project" value="UniProtKB-UniRule"/>
</dbReference>
<dbReference type="Gene3D" id="1.10.3480.10">
    <property type="entry name" value="TorD-like"/>
    <property type="match status" value="1"/>
</dbReference>
<dbReference type="HAMAP" id="MF_00940">
    <property type="entry name" value="DmsD_chaperone"/>
    <property type="match status" value="1"/>
</dbReference>
<dbReference type="InterPro" id="IPR026269">
    <property type="entry name" value="DmsD-type"/>
</dbReference>
<dbReference type="InterPro" id="IPR028611">
    <property type="entry name" value="DmsD_chaperone"/>
</dbReference>
<dbReference type="InterPro" id="IPR020945">
    <property type="entry name" value="DMSO/NO3_reduct_chaperone"/>
</dbReference>
<dbReference type="InterPro" id="IPR036411">
    <property type="entry name" value="TorD-like_sf"/>
</dbReference>
<dbReference type="InterPro" id="IPR050289">
    <property type="entry name" value="TorD/DmsD_chaperones"/>
</dbReference>
<dbReference type="NCBIfam" id="NF008632">
    <property type="entry name" value="PRK11621.1"/>
    <property type="match status" value="1"/>
</dbReference>
<dbReference type="PANTHER" id="PTHR34227">
    <property type="entry name" value="CHAPERONE PROTEIN YCDY"/>
    <property type="match status" value="1"/>
</dbReference>
<dbReference type="PANTHER" id="PTHR34227:SF6">
    <property type="entry name" value="TAT PROOFREADING CHAPERONE DMSD"/>
    <property type="match status" value="1"/>
</dbReference>
<dbReference type="Pfam" id="PF02613">
    <property type="entry name" value="Nitrate_red_del"/>
    <property type="match status" value="1"/>
</dbReference>
<dbReference type="PIRSF" id="PIRSF004690">
    <property type="entry name" value="DmsD"/>
    <property type="match status" value="1"/>
</dbReference>
<dbReference type="SUPFAM" id="SSF89155">
    <property type="entry name" value="TorD-like"/>
    <property type="match status" value="1"/>
</dbReference>